<protein>
    <recommendedName>
        <fullName evidence="1">Probable DNA-directed RNA polymerase subunit delta</fullName>
    </recommendedName>
    <alternativeName>
        <fullName evidence="1">RNAP delta factor</fullName>
    </alternativeName>
</protein>
<reference key="1">
    <citation type="journal article" date="2003" name="Proc. Natl. Acad. Sci. U.S.A.">
        <title>Complete genome sequence of Lactobacillus plantarum WCFS1.</title>
        <authorList>
            <person name="Kleerebezem M."/>
            <person name="Boekhorst J."/>
            <person name="van Kranenburg R."/>
            <person name="Molenaar D."/>
            <person name="Kuipers O.P."/>
            <person name="Leer R."/>
            <person name="Tarchini R."/>
            <person name="Peters S.A."/>
            <person name="Sandbrink H.M."/>
            <person name="Fiers M.W.E.J."/>
            <person name="Stiekema W."/>
            <person name="Klein Lankhorst R.M."/>
            <person name="Bron P.A."/>
            <person name="Hoffer S.M."/>
            <person name="Nierop Groot M.N."/>
            <person name="Kerkhoven R."/>
            <person name="De Vries M."/>
            <person name="Ursing B."/>
            <person name="De Vos W.M."/>
            <person name="Siezen R.J."/>
        </authorList>
    </citation>
    <scope>NUCLEOTIDE SEQUENCE [LARGE SCALE GENOMIC DNA]</scope>
    <source>
        <strain>ATCC BAA-793 / NCIMB 8826 / WCFS1</strain>
    </source>
</reference>
<reference key="2">
    <citation type="journal article" date="2012" name="J. Bacteriol.">
        <title>Complete resequencing and reannotation of the Lactobacillus plantarum WCFS1 genome.</title>
        <authorList>
            <person name="Siezen R.J."/>
            <person name="Francke C."/>
            <person name="Renckens B."/>
            <person name="Boekhorst J."/>
            <person name="Wels M."/>
            <person name="Kleerebezem M."/>
            <person name="van Hijum S.A."/>
        </authorList>
    </citation>
    <scope>NUCLEOTIDE SEQUENCE [LARGE SCALE GENOMIC DNA]</scope>
    <scope>GENOME REANNOTATION</scope>
    <source>
        <strain>ATCC BAA-793 / NCIMB 8826 / WCFS1</strain>
    </source>
</reference>
<evidence type="ECO:0000255" key="1">
    <source>
        <dbReference type="HAMAP-Rule" id="MF_00357"/>
    </source>
</evidence>
<evidence type="ECO:0000255" key="2">
    <source>
        <dbReference type="PROSITE-ProRule" id="PRU01261"/>
    </source>
</evidence>
<evidence type="ECO:0000256" key="3">
    <source>
        <dbReference type="SAM" id="MobiDB-lite"/>
    </source>
</evidence>
<feature type="chain" id="PRO_0000204314" description="Probable DNA-directed RNA polymerase subunit delta">
    <location>
        <begin position="1"/>
        <end position="199"/>
    </location>
</feature>
<feature type="domain" description="HTH HARE-type" evidence="2">
    <location>
        <begin position="14"/>
        <end position="81"/>
    </location>
</feature>
<feature type="region of interest" description="Disordered" evidence="3">
    <location>
        <begin position="116"/>
        <end position="199"/>
    </location>
</feature>
<feature type="compositionally biased region" description="Acidic residues" evidence="3">
    <location>
        <begin position="116"/>
        <end position="147"/>
    </location>
</feature>
<feature type="compositionally biased region" description="Acidic residues" evidence="3">
    <location>
        <begin position="157"/>
        <end position="171"/>
    </location>
</feature>
<feature type="compositionally biased region" description="Acidic residues" evidence="3">
    <location>
        <begin position="182"/>
        <end position="199"/>
    </location>
</feature>
<dbReference type="EMBL" id="AL935263">
    <property type="protein sequence ID" value="CCC77977.1"/>
    <property type="molecule type" value="Genomic_DNA"/>
</dbReference>
<dbReference type="RefSeq" id="WP_011101020.1">
    <property type="nucleotide sequence ID" value="NC_004567.2"/>
</dbReference>
<dbReference type="RefSeq" id="YP_004888491.1">
    <property type="nucleotide sequence ID" value="NC_004567.2"/>
</dbReference>
<dbReference type="SMR" id="Q88Z77"/>
<dbReference type="STRING" id="220668.lp_0480"/>
<dbReference type="EnsemblBacteria" id="CCC77977">
    <property type="protein sequence ID" value="CCC77977"/>
    <property type="gene ID" value="lp_0480"/>
</dbReference>
<dbReference type="KEGG" id="lpl:lp_0480"/>
<dbReference type="PATRIC" id="fig|220668.9.peg.394"/>
<dbReference type="eggNOG" id="COG3343">
    <property type="taxonomic scope" value="Bacteria"/>
</dbReference>
<dbReference type="HOGENOM" id="CLU_116648_0_0_9"/>
<dbReference type="OrthoDB" id="401223at2"/>
<dbReference type="PhylomeDB" id="Q88Z77"/>
<dbReference type="Proteomes" id="UP000000432">
    <property type="component" value="Chromosome"/>
</dbReference>
<dbReference type="GO" id="GO:0000428">
    <property type="term" value="C:DNA-directed RNA polymerase complex"/>
    <property type="evidence" value="ECO:0007669"/>
    <property type="project" value="UniProtKB-KW"/>
</dbReference>
<dbReference type="GO" id="GO:0003899">
    <property type="term" value="F:DNA-directed RNA polymerase activity"/>
    <property type="evidence" value="ECO:0007669"/>
    <property type="project" value="UniProtKB-UniRule"/>
</dbReference>
<dbReference type="GO" id="GO:0006351">
    <property type="term" value="P:DNA-templated transcription"/>
    <property type="evidence" value="ECO:0007669"/>
    <property type="project" value="InterPro"/>
</dbReference>
<dbReference type="GO" id="GO:0006355">
    <property type="term" value="P:regulation of DNA-templated transcription"/>
    <property type="evidence" value="ECO:0007669"/>
    <property type="project" value="UniProtKB-UniRule"/>
</dbReference>
<dbReference type="Gene3D" id="1.10.10.1250">
    <property type="entry name" value="RNA polymerase, subunit delta, N-terminal domain"/>
    <property type="match status" value="1"/>
</dbReference>
<dbReference type="HAMAP" id="MF_00357">
    <property type="entry name" value="RNApol_bact_RpoE"/>
    <property type="match status" value="1"/>
</dbReference>
<dbReference type="InterPro" id="IPR007759">
    <property type="entry name" value="Asxl_HARE-HTH"/>
</dbReference>
<dbReference type="InterPro" id="IPR038087">
    <property type="entry name" value="RNAP_delta_N_dom_sf"/>
</dbReference>
<dbReference type="InterPro" id="IPR029757">
    <property type="entry name" value="RpoE"/>
</dbReference>
<dbReference type="NCBIfam" id="TIGR04567">
    <property type="entry name" value="RNAP_delt_lowGC"/>
    <property type="match status" value="1"/>
</dbReference>
<dbReference type="Pfam" id="PF05066">
    <property type="entry name" value="HARE-HTH"/>
    <property type="match status" value="1"/>
</dbReference>
<dbReference type="PROSITE" id="PS51913">
    <property type="entry name" value="HTH_HARE"/>
    <property type="match status" value="1"/>
</dbReference>
<sequence length="199" mass="22479">MELKQFDGQKKSELSLIEVAHAILSQHGDVMAFADLTNAVQSYLGKSDEEIRERLSQFYTDLNIDGSFISLGDNMWGLRAWYPFESIDEAVIHTDDDEDEDRPKRKKVNAFLADAGDDDDVIDYDDDDPEDDDNYDDDDDQDDDTDDSASSKYDELAGVDDTDDDVADETLPDGIEGQLSELNDDDDDDDYDDEDDESK</sequence>
<keyword id="KW-0240">DNA-directed RNA polymerase</keyword>
<keyword id="KW-0548">Nucleotidyltransferase</keyword>
<keyword id="KW-1185">Reference proteome</keyword>
<keyword id="KW-0804">Transcription</keyword>
<keyword id="KW-0808">Transferase</keyword>
<organism>
    <name type="scientific">Lactiplantibacillus plantarum (strain ATCC BAA-793 / NCIMB 8826 / WCFS1)</name>
    <name type="common">Lactobacillus plantarum</name>
    <dbReference type="NCBI Taxonomy" id="220668"/>
    <lineage>
        <taxon>Bacteria</taxon>
        <taxon>Bacillati</taxon>
        <taxon>Bacillota</taxon>
        <taxon>Bacilli</taxon>
        <taxon>Lactobacillales</taxon>
        <taxon>Lactobacillaceae</taxon>
        <taxon>Lactiplantibacillus</taxon>
    </lineage>
</organism>
<gene>
    <name evidence="1" type="primary">rpoE</name>
    <name type="ordered locus">lp_0480</name>
</gene>
<accession>Q88Z77</accession>
<accession>F9UKW2</accession>
<name>RPOE_LACPL</name>
<comment type="function">
    <text evidence="1">Participates in both the initiation and recycling phases of transcription. In the presence of the delta subunit, RNAP displays an increased specificity of transcription, a decreased affinity for nucleic acids, and an increased efficiency of RNA synthesis because of enhanced recycling.</text>
</comment>
<comment type="subunit">
    <text evidence="1">RNAP is composed of a core of 2 alpha, a beta and a beta' subunits. The core is associated with a delta subunit and one of several sigma factors.</text>
</comment>
<comment type="similarity">
    <text evidence="1">Belongs to the RpoE family.</text>
</comment>
<proteinExistence type="inferred from homology"/>